<protein>
    <recommendedName>
        <fullName evidence="1">ATP synthase subunit a, chloroplastic</fullName>
    </recommendedName>
    <alternativeName>
        <fullName evidence="1">ATP synthase F0 sector subunit a</fullName>
    </alternativeName>
    <alternativeName>
        <fullName evidence="1">F-ATPase subunit IV</fullName>
    </alternativeName>
</protein>
<name>ATPI_CYACA</name>
<evidence type="ECO:0000255" key="1">
    <source>
        <dbReference type="HAMAP-Rule" id="MF_01393"/>
    </source>
</evidence>
<sequence length="239" mass="27073">MISNNLEICSIDIGVHWYWNFLGLKIHGQVLLVSWVAIIILLLLAILGTFNMQKEPRGFQNFLEYVFEFLQDISKNQIEEKYYKSWVPFISTLFLFIFVSNWLGALVPWKLIKIPEGELAAPTNDINTTVALAMLTSVSYFYAGLSKKGLRYFLKYISPTPILLPINILEDFTKPLSLSFRLFGNIVADELVVAVFNLLFPLFLPLPVMVLGLFASSIQALIFATLSASYIGESLADHH</sequence>
<geneLocation type="chloroplast"/>
<proteinExistence type="inferred from homology"/>
<keyword id="KW-0066">ATP synthesis</keyword>
<keyword id="KW-0138">CF(0)</keyword>
<keyword id="KW-0150">Chloroplast</keyword>
<keyword id="KW-0375">Hydrogen ion transport</keyword>
<keyword id="KW-0406">Ion transport</keyword>
<keyword id="KW-0472">Membrane</keyword>
<keyword id="KW-0934">Plastid</keyword>
<keyword id="KW-0793">Thylakoid</keyword>
<keyword id="KW-0812">Transmembrane</keyword>
<keyword id="KW-1133">Transmembrane helix</keyword>
<keyword id="KW-0813">Transport</keyword>
<dbReference type="EMBL" id="AF022186">
    <property type="protein sequence ID" value="AAF13010.1"/>
    <property type="molecule type" value="Genomic_DNA"/>
</dbReference>
<dbReference type="RefSeq" id="NP_045036.1">
    <property type="nucleotide sequence ID" value="NC_001840.1"/>
</dbReference>
<dbReference type="SMR" id="Q9TM31"/>
<dbReference type="GeneID" id="800155"/>
<dbReference type="GO" id="GO:0009535">
    <property type="term" value="C:chloroplast thylakoid membrane"/>
    <property type="evidence" value="ECO:0007669"/>
    <property type="project" value="UniProtKB-SubCell"/>
</dbReference>
<dbReference type="GO" id="GO:0005886">
    <property type="term" value="C:plasma membrane"/>
    <property type="evidence" value="ECO:0007669"/>
    <property type="project" value="UniProtKB-UniRule"/>
</dbReference>
<dbReference type="GO" id="GO:0045259">
    <property type="term" value="C:proton-transporting ATP synthase complex"/>
    <property type="evidence" value="ECO:0007669"/>
    <property type="project" value="UniProtKB-KW"/>
</dbReference>
<dbReference type="GO" id="GO:0046933">
    <property type="term" value="F:proton-transporting ATP synthase activity, rotational mechanism"/>
    <property type="evidence" value="ECO:0007669"/>
    <property type="project" value="UniProtKB-UniRule"/>
</dbReference>
<dbReference type="CDD" id="cd00310">
    <property type="entry name" value="ATP-synt_Fo_a_6"/>
    <property type="match status" value="1"/>
</dbReference>
<dbReference type="FunFam" id="1.20.120.220:FF:000001">
    <property type="entry name" value="ATP synthase subunit a, chloroplastic"/>
    <property type="match status" value="1"/>
</dbReference>
<dbReference type="Gene3D" id="1.20.120.220">
    <property type="entry name" value="ATP synthase, F0 complex, subunit A"/>
    <property type="match status" value="1"/>
</dbReference>
<dbReference type="HAMAP" id="MF_01393">
    <property type="entry name" value="ATP_synth_a_bact"/>
    <property type="match status" value="1"/>
</dbReference>
<dbReference type="InterPro" id="IPR045082">
    <property type="entry name" value="ATP_syn_F0_a_bact/chloroplast"/>
</dbReference>
<dbReference type="InterPro" id="IPR000568">
    <property type="entry name" value="ATP_synth_F0_asu"/>
</dbReference>
<dbReference type="InterPro" id="IPR023011">
    <property type="entry name" value="ATP_synth_F0_asu_AS"/>
</dbReference>
<dbReference type="InterPro" id="IPR035908">
    <property type="entry name" value="F0_ATP_A_sf"/>
</dbReference>
<dbReference type="NCBIfam" id="TIGR01131">
    <property type="entry name" value="ATP_synt_6_or_A"/>
    <property type="match status" value="1"/>
</dbReference>
<dbReference type="PANTHER" id="PTHR42823">
    <property type="entry name" value="ATP SYNTHASE SUBUNIT A, CHLOROPLASTIC"/>
    <property type="match status" value="1"/>
</dbReference>
<dbReference type="PANTHER" id="PTHR42823:SF3">
    <property type="entry name" value="ATP SYNTHASE SUBUNIT A, CHLOROPLASTIC"/>
    <property type="match status" value="1"/>
</dbReference>
<dbReference type="Pfam" id="PF00119">
    <property type="entry name" value="ATP-synt_A"/>
    <property type="match status" value="1"/>
</dbReference>
<dbReference type="PRINTS" id="PR00123">
    <property type="entry name" value="ATPASEA"/>
</dbReference>
<dbReference type="SUPFAM" id="SSF81336">
    <property type="entry name" value="F1F0 ATP synthase subunit A"/>
    <property type="match status" value="1"/>
</dbReference>
<dbReference type="PROSITE" id="PS00449">
    <property type="entry name" value="ATPASE_A"/>
    <property type="match status" value="1"/>
</dbReference>
<gene>
    <name evidence="1" type="primary">atpI</name>
</gene>
<feature type="chain" id="PRO_0000002582" description="ATP synthase subunit a, chloroplastic">
    <location>
        <begin position="1"/>
        <end position="239"/>
    </location>
</feature>
<feature type="transmembrane region" description="Helical" evidence="1">
    <location>
        <begin position="30"/>
        <end position="50"/>
    </location>
</feature>
<feature type="transmembrane region" description="Helical" evidence="1">
    <location>
        <begin position="87"/>
        <end position="107"/>
    </location>
</feature>
<feature type="transmembrane region" description="Helical" evidence="1">
    <location>
        <begin position="126"/>
        <end position="146"/>
    </location>
</feature>
<feature type="transmembrane region" description="Helical" evidence="1">
    <location>
        <begin position="191"/>
        <end position="211"/>
    </location>
</feature>
<feature type="transmembrane region" description="Helical" evidence="1">
    <location>
        <begin position="212"/>
        <end position="232"/>
    </location>
</feature>
<organism>
    <name type="scientific">Cyanidium caldarium</name>
    <name type="common">Red alga</name>
    <dbReference type="NCBI Taxonomy" id="2771"/>
    <lineage>
        <taxon>Eukaryota</taxon>
        <taxon>Rhodophyta</taxon>
        <taxon>Bangiophyceae</taxon>
        <taxon>Cyanidiales</taxon>
        <taxon>Cyanidiaceae</taxon>
        <taxon>Cyanidium</taxon>
    </lineage>
</organism>
<reference key="1">
    <citation type="journal article" date="2000" name="J. Mol. Evol.">
        <title>The structure and gene repertoire of an ancient red algal plastid genome.</title>
        <authorList>
            <person name="Gloeckner G."/>
            <person name="Rosenthal A."/>
            <person name="Valentin K.-U."/>
        </authorList>
    </citation>
    <scope>NUCLEOTIDE SEQUENCE [LARGE SCALE GENOMIC DNA]</scope>
    <source>
        <strain>RK-1</strain>
    </source>
</reference>
<accession>Q9TM31</accession>
<comment type="function">
    <text evidence="1">Key component of the proton channel; it plays a direct role in the translocation of protons across the membrane.</text>
</comment>
<comment type="subunit">
    <text evidence="1">F-type ATPases have 2 components, CF(1) - the catalytic core - and CF(0) - the membrane proton channel. CF(1) has five subunits: alpha(3), beta(3), gamma(1), delta(1), epsilon(1). CF(0) has four main subunits: a, b, b' and c.</text>
</comment>
<comment type="subcellular location">
    <subcellularLocation>
        <location evidence="1">Plastid</location>
        <location evidence="1">Chloroplast thylakoid membrane</location>
        <topology evidence="1">Multi-pass membrane protein</topology>
    </subcellularLocation>
</comment>
<comment type="similarity">
    <text evidence="1">Belongs to the ATPase A chain family.</text>
</comment>